<proteinExistence type="evidence at transcript level"/>
<evidence type="ECO:0000250" key="1">
    <source>
        <dbReference type="UniProtKB" id="P61088"/>
    </source>
</evidence>
<evidence type="ECO:0000255" key="2">
    <source>
        <dbReference type="PROSITE-ProRule" id="PRU00388"/>
    </source>
</evidence>
<evidence type="ECO:0000255" key="3">
    <source>
        <dbReference type="PROSITE-ProRule" id="PRU10133"/>
    </source>
</evidence>
<accession>Q4R4I1</accession>
<feature type="chain" id="PRO_0000082503" description="Ubiquitin-conjugating enzyme E2 N">
    <location>
        <begin position="1"/>
        <end position="152"/>
    </location>
</feature>
<feature type="domain" description="UBC core" evidence="2">
    <location>
        <begin position="3"/>
        <end position="149"/>
    </location>
</feature>
<feature type="active site" description="Glycyl thioester intermediate" evidence="2">
    <location>
        <position position="87"/>
    </location>
</feature>
<feature type="modified residue" description="N6-acetyllysine" evidence="1">
    <location>
        <position position="82"/>
    </location>
</feature>
<feature type="cross-link" description="Glycyl lysine isopeptide (Lys-Gly) (interchain with G-Cter in ISG15)" evidence="1">
    <location>
        <position position="92"/>
    </location>
</feature>
<sequence length="152" mass="17112">MAGLPRRIIKETQRLLAEPVPGIKAEPDESNARYFHVVIAGPQDSPFEGGTFKLELFLPEEYPMAAPKVRFMTKIYHPNVDKSGRICLDILKDKWSPALQIRTVLLSIQALLSAPNPDDPLANDVAEQWKTNEAQAIETARAWTRLYAMNNI</sequence>
<protein>
    <recommendedName>
        <fullName>Ubiquitin-conjugating enzyme E2 N</fullName>
        <ecNumber>2.3.2.23</ecNumber>
    </recommendedName>
    <alternativeName>
        <fullName>E2 ubiquitin-conjugating enzyme N</fullName>
    </alternativeName>
    <alternativeName>
        <fullName>Ubiquitin carrier protein N</fullName>
    </alternativeName>
    <alternativeName>
        <fullName>Ubiquitin-protein ligase N</fullName>
    </alternativeName>
</protein>
<keyword id="KW-0007">Acetylation</keyword>
<keyword id="KW-0067">ATP-binding</keyword>
<keyword id="KW-0227">DNA damage</keyword>
<keyword id="KW-0234">DNA repair</keyword>
<keyword id="KW-1017">Isopeptide bond</keyword>
<keyword id="KW-0547">Nucleotide-binding</keyword>
<keyword id="KW-1185">Reference proteome</keyword>
<keyword id="KW-0808">Transferase</keyword>
<keyword id="KW-0832">Ubl conjugation</keyword>
<keyword id="KW-0833">Ubl conjugation pathway</keyword>
<comment type="function">
    <text evidence="1">The UBE2V1-UBE2N and UBE2V2-UBE2N heterodimers catalyze the synthesis of non-canonical 'Lys-63'-linked polyubiquitin chains. This type of polyubiquitination does not lead to protein degradation by the proteasome. Mediates transcriptional activation of target genes. Plays a role in the control of progress through the cell cycle and differentiation. Plays a role in the error-free DNA repair pathway and contributes to the survival of cells after DNA damage. Acts together with the E3 ligases, HLTF and SHPRH, in the 'Lys-63'-linked poly-ubiquitination of PCNA upon genotoxic stress, which is required for DNA repair. Appears to act together with E3 ligase RNF5 in the 'Lys-63'-linked polyubiquitination of JKAMP thereby regulating JKAMP function by decreasing its association with components of the proteasome and ERAD. Promotes TRIM5 capsid-specific restriction activity and the UBE2V1-UBE2N heterodimer acts in concert with TRIM5 to generate 'Lys-63'-linked polyubiquitin chains which activate the MAP3K7/TAK1 complex which in turn results in the induction and expression of NF-kappa-B and MAPK-responsive inflammatory genes. Together with RNF135 and UB2V1, catalyzes the viral RNA-dependent 'Lys-63'-linked polyubiquitination of RIGI to activate the downstream signaling pathway that leads to interferon beta production (By similarity). UBE2V1-UBE2N together with TRAF3IP2 E3 ubiquitin ligase mediate 'Lys-63'-linked polyubiquitination of TRAF6, a component of IL17A-mediated signaling pathway.</text>
</comment>
<comment type="catalytic activity">
    <reaction evidence="2 3">
        <text>S-ubiquitinyl-[E1 ubiquitin-activating enzyme]-L-cysteine + [E2 ubiquitin-conjugating enzyme]-L-cysteine = [E1 ubiquitin-activating enzyme]-L-cysteine + S-ubiquitinyl-[E2 ubiquitin-conjugating enzyme]-L-cysteine.</text>
        <dbReference type="EC" id="2.3.2.23"/>
    </reaction>
</comment>
<comment type="activity regulation">
    <text evidence="1">Activity is inhibited by binding to OTUB1, which prevents 'Lys-63'-linked polyubiquitination.</text>
</comment>
<comment type="pathway">
    <text evidence="2">Protein modification; protein ubiquitination.</text>
</comment>
<comment type="subunit">
    <text evidence="1">Heterodimer with UBE2V2. Interacts (UBE2V2-UBE2N heterodimer) with the E3 ligase STUB1 (via the U-box domain); the complex has a specific 'Lys-63'-linked polyubiquitination activity. Interacts with RNF8 and RNF168. Interacts with RNF11. Interacts with the E3 ligases, HLTF and SHPRH; the interactions promote the 'Lys-63'-linked polyubiquitination of PCNA upon genotoxic stress and lead to DNA repair. Interacts with ARIH2 (via RING-type 2). Interacts with OTUB1; leading to inhibit E2-conjugating activity. Interacts with RIGI and RNF135; involved in RIGI ubiquitination and activation (By similarity).</text>
</comment>
<comment type="PTM">
    <text evidence="1">Conjugation to ISG15 impairs formation of the thioester bond with ubiquitin but not interaction with UBE2V2.</text>
</comment>
<comment type="similarity">
    <text evidence="2">Belongs to the ubiquitin-conjugating enzyme family.</text>
</comment>
<gene>
    <name type="primary">UBE2N</name>
    <name type="ORF">QtrA-13863</name>
</gene>
<dbReference type="EC" id="2.3.2.23"/>
<dbReference type="EMBL" id="AB169913">
    <property type="protein sequence ID" value="BAE01994.1"/>
    <property type="molecule type" value="mRNA"/>
</dbReference>
<dbReference type="RefSeq" id="NP_001271807.1">
    <property type="nucleotide sequence ID" value="NM_001284878.1"/>
</dbReference>
<dbReference type="BMRB" id="Q4R4I1"/>
<dbReference type="SMR" id="Q4R4I1"/>
<dbReference type="STRING" id="9541.ENSMFAP00000045311"/>
<dbReference type="eggNOG" id="KOG0417">
    <property type="taxonomic scope" value="Eukaryota"/>
</dbReference>
<dbReference type="UniPathway" id="UPA00143"/>
<dbReference type="Proteomes" id="UP000233100">
    <property type="component" value="Unplaced"/>
</dbReference>
<dbReference type="GO" id="GO:0031372">
    <property type="term" value="C:UBC13-MMS2 complex"/>
    <property type="evidence" value="ECO:0000250"/>
    <property type="project" value="UniProtKB"/>
</dbReference>
<dbReference type="GO" id="GO:0000151">
    <property type="term" value="C:ubiquitin ligase complex"/>
    <property type="evidence" value="ECO:0000250"/>
    <property type="project" value="UniProtKB"/>
</dbReference>
<dbReference type="GO" id="GO:0005524">
    <property type="term" value="F:ATP binding"/>
    <property type="evidence" value="ECO:0007669"/>
    <property type="project" value="UniProtKB-KW"/>
</dbReference>
<dbReference type="GO" id="GO:0061631">
    <property type="term" value="F:ubiquitin conjugating enzyme activity"/>
    <property type="evidence" value="ECO:0007669"/>
    <property type="project" value="UniProtKB-EC"/>
</dbReference>
<dbReference type="GO" id="GO:0004842">
    <property type="term" value="F:ubiquitin-protein transferase activity"/>
    <property type="evidence" value="ECO:0000250"/>
    <property type="project" value="UniProtKB"/>
</dbReference>
<dbReference type="GO" id="GO:0006281">
    <property type="term" value="P:DNA repair"/>
    <property type="evidence" value="ECO:0007669"/>
    <property type="project" value="UniProtKB-KW"/>
</dbReference>
<dbReference type="GO" id="GO:0070534">
    <property type="term" value="P:protein K63-linked ubiquitination"/>
    <property type="evidence" value="ECO:0000250"/>
    <property type="project" value="UniProtKB"/>
</dbReference>
<dbReference type="CDD" id="cd23813">
    <property type="entry name" value="UBCc_UBE2N"/>
    <property type="match status" value="1"/>
</dbReference>
<dbReference type="FunFam" id="3.10.110.10:FF:000015">
    <property type="entry name" value="Ubiquitin-conjugating enzyme E2 N"/>
    <property type="match status" value="1"/>
</dbReference>
<dbReference type="Gene3D" id="3.10.110.10">
    <property type="entry name" value="Ubiquitin Conjugating Enzyme"/>
    <property type="match status" value="1"/>
</dbReference>
<dbReference type="InterPro" id="IPR000608">
    <property type="entry name" value="UBQ-conjugat_E2_core"/>
</dbReference>
<dbReference type="InterPro" id="IPR023313">
    <property type="entry name" value="UBQ-conjugating_AS"/>
</dbReference>
<dbReference type="InterPro" id="IPR016135">
    <property type="entry name" value="UBQ-conjugating_enzyme/RWD"/>
</dbReference>
<dbReference type="PANTHER" id="PTHR24068">
    <property type="entry name" value="UBIQUITIN-CONJUGATING ENZYME E2"/>
    <property type="match status" value="1"/>
</dbReference>
<dbReference type="Pfam" id="PF00179">
    <property type="entry name" value="UQ_con"/>
    <property type="match status" value="1"/>
</dbReference>
<dbReference type="SMART" id="SM00212">
    <property type="entry name" value="UBCc"/>
    <property type="match status" value="1"/>
</dbReference>
<dbReference type="SUPFAM" id="SSF54495">
    <property type="entry name" value="UBC-like"/>
    <property type="match status" value="1"/>
</dbReference>
<dbReference type="PROSITE" id="PS00183">
    <property type="entry name" value="UBC_1"/>
    <property type="match status" value="1"/>
</dbReference>
<dbReference type="PROSITE" id="PS50127">
    <property type="entry name" value="UBC_2"/>
    <property type="match status" value="1"/>
</dbReference>
<reference key="1">
    <citation type="submission" date="2005-06" db="EMBL/GenBank/DDBJ databases">
        <title>DNA sequences of macaque genes expressed in brain or testis and its evolutionary implications.</title>
        <authorList>
            <consortium name="International consortium for macaque cDNA sequencing and analysis"/>
        </authorList>
    </citation>
    <scope>NUCLEOTIDE SEQUENCE [LARGE SCALE MRNA]</scope>
    <source>
        <tissue>Temporal cortex</tissue>
    </source>
</reference>
<name>UBE2N_MACFA</name>
<organism>
    <name type="scientific">Macaca fascicularis</name>
    <name type="common">Crab-eating macaque</name>
    <name type="synonym">Cynomolgus monkey</name>
    <dbReference type="NCBI Taxonomy" id="9541"/>
    <lineage>
        <taxon>Eukaryota</taxon>
        <taxon>Metazoa</taxon>
        <taxon>Chordata</taxon>
        <taxon>Craniata</taxon>
        <taxon>Vertebrata</taxon>
        <taxon>Euteleostomi</taxon>
        <taxon>Mammalia</taxon>
        <taxon>Eutheria</taxon>
        <taxon>Euarchontoglires</taxon>
        <taxon>Primates</taxon>
        <taxon>Haplorrhini</taxon>
        <taxon>Catarrhini</taxon>
        <taxon>Cercopithecidae</taxon>
        <taxon>Cercopithecinae</taxon>
        <taxon>Macaca</taxon>
    </lineage>
</organism>